<comment type="function">
    <text evidence="1">Catalyzes amidations at positions B, D, E, and G on adenosylcobyrinic A,C-diamide. NH(2) groups are provided by glutamine, and one molecule of ATP is hydrogenolyzed for each amidation.</text>
</comment>
<comment type="pathway">
    <text evidence="1">Cofactor biosynthesis; adenosylcobalamin biosynthesis.</text>
</comment>
<comment type="similarity">
    <text evidence="1">Belongs to the CobB/CobQ family. CobQ subfamily.</text>
</comment>
<gene>
    <name evidence="1" type="primary">cobQ</name>
    <name type="ordered locus">MmarC6_1457</name>
</gene>
<accession>A9AA97</accession>
<name>COBQ_METM6</name>
<organism>
    <name type="scientific">Methanococcus maripaludis (strain C6 / ATCC BAA-1332)</name>
    <dbReference type="NCBI Taxonomy" id="444158"/>
    <lineage>
        <taxon>Archaea</taxon>
        <taxon>Methanobacteriati</taxon>
        <taxon>Methanobacteriota</taxon>
        <taxon>Methanomada group</taxon>
        <taxon>Methanococci</taxon>
        <taxon>Methanococcales</taxon>
        <taxon>Methanococcaceae</taxon>
        <taxon>Methanococcus</taxon>
    </lineage>
</organism>
<feature type="chain" id="PRO_1000090233" description="Probable cobyric acid synthase">
    <location>
        <begin position="1"/>
        <end position="492"/>
    </location>
</feature>
<feature type="domain" description="GATase cobBQ-type" evidence="1">
    <location>
        <begin position="252"/>
        <end position="444"/>
    </location>
</feature>
<feature type="active site" description="Nucleophile" evidence="1">
    <location>
        <position position="330"/>
    </location>
</feature>
<feature type="active site" evidence="1">
    <location>
        <position position="436"/>
    </location>
</feature>
<sequence>MAKFIMVVGTSSNSGKTVLVSGICRMLSNKGYKVAPFKSQNMSLNSRVSIEDGEIAVAQYTQAMAARAEPSIHFNPILLKPKGNFVSQVIVHGIPYEDRDYNEYRSKKDVLLEKIKESIEYLDKNYDYVVIEGAGSCCEINLLKDDIANLRIAEISGADAILVSDIDRGGVFAAIYGTVKLLPENWRKLLKGFVINKFRGNLDVLKDGFEKIEELTNIPVIGTIPYDETLILPEEDSQALEGKRVFGNVKSPIEVNIVKFSKIANFTDVDPLSSDCLMKYIDFNDDITGDILILPGTRCSTVEMDLMKKHGMDKKIMEFVENGGIVLGICGGYQTLGKILIDENFSEGDVGTISGLGLFDMETTFGNKKAIKNSTGTISIFDQNFDVMGYELHEGHSISNETPLISLSRGFGNCGDSYDGSFKVIGDSYIFGTYFHGILENFEFRNYLVNIVNNKKNLSRIENDNYAEIFNENMDKLSKLIEENLDLSKIIK</sequence>
<dbReference type="EMBL" id="CP000867">
    <property type="protein sequence ID" value="ABX02270.1"/>
    <property type="molecule type" value="Genomic_DNA"/>
</dbReference>
<dbReference type="STRING" id="444158.MmarC6_1457"/>
<dbReference type="KEGG" id="mmx:MmarC6_1457"/>
<dbReference type="eggNOG" id="arCOG00105">
    <property type="taxonomic scope" value="Archaea"/>
</dbReference>
<dbReference type="HOGENOM" id="CLU_019250_2_2_2"/>
<dbReference type="OrthoDB" id="53136at2157"/>
<dbReference type="PhylomeDB" id="A9AA97"/>
<dbReference type="UniPathway" id="UPA00148"/>
<dbReference type="GO" id="GO:0015420">
    <property type="term" value="F:ABC-type vitamin B12 transporter activity"/>
    <property type="evidence" value="ECO:0007669"/>
    <property type="project" value="UniProtKB-UniRule"/>
</dbReference>
<dbReference type="GO" id="GO:0003824">
    <property type="term" value="F:catalytic activity"/>
    <property type="evidence" value="ECO:0007669"/>
    <property type="project" value="InterPro"/>
</dbReference>
<dbReference type="GO" id="GO:0009236">
    <property type="term" value="P:cobalamin biosynthetic process"/>
    <property type="evidence" value="ECO:0007669"/>
    <property type="project" value="UniProtKB-UniRule"/>
</dbReference>
<dbReference type="CDD" id="cd05389">
    <property type="entry name" value="CobQ_N"/>
    <property type="match status" value="1"/>
</dbReference>
<dbReference type="CDD" id="cd01750">
    <property type="entry name" value="GATase1_CobQ"/>
    <property type="match status" value="1"/>
</dbReference>
<dbReference type="Gene3D" id="3.40.50.880">
    <property type="match status" value="1"/>
</dbReference>
<dbReference type="Gene3D" id="3.40.50.300">
    <property type="entry name" value="P-loop containing nucleotide triphosphate hydrolases"/>
    <property type="match status" value="1"/>
</dbReference>
<dbReference type="HAMAP" id="MF_00028">
    <property type="entry name" value="CobQ"/>
    <property type="match status" value="1"/>
</dbReference>
<dbReference type="InterPro" id="IPR029062">
    <property type="entry name" value="Class_I_gatase-like"/>
</dbReference>
<dbReference type="InterPro" id="IPR002586">
    <property type="entry name" value="CobQ/CobB/MinD/ParA_Nub-bd_dom"/>
</dbReference>
<dbReference type="InterPro" id="IPR033949">
    <property type="entry name" value="CobQ_GATase1"/>
</dbReference>
<dbReference type="InterPro" id="IPR047045">
    <property type="entry name" value="CobQ_N"/>
</dbReference>
<dbReference type="InterPro" id="IPR004459">
    <property type="entry name" value="CobQ_synth"/>
</dbReference>
<dbReference type="InterPro" id="IPR011698">
    <property type="entry name" value="GATase_3"/>
</dbReference>
<dbReference type="InterPro" id="IPR027417">
    <property type="entry name" value="P-loop_NTPase"/>
</dbReference>
<dbReference type="NCBIfam" id="TIGR00313">
    <property type="entry name" value="cobQ"/>
    <property type="match status" value="1"/>
</dbReference>
<dbReference type="NCBIfam" id="NF001989">
    <property type="entry name" value="PRK00784.1"/>
    <property type="match status" value="1"/>
</dbReference>
<dbReference type="PANTHER" id="PTHR21343:SF1">
    <property type="entry name" value="COBYRIC ACID SYNTHASE"/>
    <property type="match status" value="1"/>
</dbReference>
<dbReference type="PANTHER" id="PTHR21343">
    <property type="entry name" value="DETHIOBIOTIN SYNTHETASE"/>
    <property type="match status" value="1"/>
</dbReference>
<dbReference type="Pfam" id="PF01656">
    <property type="entry name" value="CbiA"/>
    <property type="match status" value="1"/>
</dbReference>
<dbReference type="Pfam" id="PF07685">
    <property type="entry name" value="GATase_3"/>
    <property type="match status" value="1"/>
</dbReference>
<dbReference type="SUPFAM" id="SSF52317">
    <property type="entry name" value="Class I glutamine amidotransferase-like"/>
    <property type="match status" value="1"/>
</dbReference>
<dbReference type="SUPFAM" id="SSF52540">
    <property type="entry name" value="P-loop containing nucleoside triphosphate hydrolases"/>
    <property type="match status" value="1"/>
</dbReference>
<dbReference type="PROSITE" id="PS51274">
    <property type="entry name" value="GATASE_COBBQ"/>
    <property type="match status" value="1"/>
</dbReference>
<protein>
    <recommendedName>
        <fullName evidence="1">Probable cobyric acid synthase</fullName>
    </recommendedName>
</protein>
<evidence type="ECO:0000255" key="1">
    <source>
        <dbReference type="HAMAP-Rule" id="MF_00028"/>
    </source>
</evidence>
<reference key="1">
    <citation type="submission" date="2007-10" db="EMBL/GenBank/DDBJ databases">
        <title>Complete sequence of Methanococcus maripaludis C6.</title>
        <authorList>
            <consortium name="US DOE Joint Genome Institute"/>
            <person name="Copeland A."/>
            <person name="Lucas S."/>
            <person name="Lapidus A."/>
            <person name="Barry K."/>
            <person name="Glavina del Rio T."/>
            <person name="Dalin E."/>
            <person name="Tice H."/>
            <person name="Pitluck S."/>
            <person name="Clum A."/>
            <person name="Schmutz J."/>
            <person name="Larimer F."/>
            <person name="Land M."/>
            <person name="Hauser L."/>
            <person name="Kyrpides N."/>
            <person name="Mikhailova N."/>
            <person name="Sieprawska-Lupa M."/>
            <person name="Whitman W.B."/>
            <person name="Richardson P."/>
        </authorList>
    </citation>
    <scope>NUCLEOTIDE SEQUENCE [LARGE SCALE GENOMIC DNA]</scope>
    <source>
        <strain>C6 / ATCC BAA-1332</strain>
    </source>
</reference>
<proteinExistence type="inferred from homology"/>
<keyword id="KW-0169">Cobalamin biosynthesis</keyword>
<keyword id="KW-0315">Glutamine amidotransferase</keyword>